<keyword id="KW-0903">Direct protein sequencing</keyword>
<keyword id="KW-0329">Glyoxylate bypass</keyword>
<keyword id="KW-0330">Glyoxysome</keyword>
<keyword id="KW-0576">Peroxisome</keyword>
<keyword id="KW-1185">Reference proteome</keyword>
<keyword id="KW-0808">Transferase</keyword>
<keyword id="KW-0816">Tricarboxylic acid cycle</keyword>
<evidence type="ECO:0000250" key="1"/>
<evidence type="ECO:0000255" key="2"/>
<evidence type="ECO:0000305" key="3"/>
<name>MASY_CUCMA</name>
<protein>
    <recommendedName>
        <fullName>Malate synthase, glyoxysomal</fullName>
        <ecNumber>2.3.3.9</ecNumber>
    </recommendedName>
</protein>
<feature type="chain" id="PRO_0000166867" description="Malate synthase, glyoxysomal">
    <location>
        <begin position="1"/>
        <end position="566"/>
    </location>
</feature>
<feature type="short sequence motif" description="Microbody targeting signal" evidence="2">
    <location>
        <begin position="564"/>
        <end position="566"/>
    </location>
</feature>
<feature type="active site" description="Proton acceptor" evidence="1">
    <location>
        <position position="182"/>
    </location>
</feature>
<feature type="active site" description="Proton donor" evidence="1">
    <location>
        <position position="467"/>
    </location>
</feature>
<accession>P24571</accession>
<comment type="catalytic activity">
    <reaction>
        <text>glyoxylate + acetyl-CoA + H2O = (S)-malate + CoA + H(+)</text>
        <dbReference type="Rhea" id="RHEA:18181"/>
        <dbReference type="ChEBI" id="CHEBI:15377"/>
        <dbReference type="ChEBI" id="CHEBI:15378"/>
        <dbReference type="ChEBI" id="CHEBI:15589"/>
        <dbReference type="ChEBI" id="CHEBI:36655"/>
        <dbReference type="ChEBI" id="CHEBI:57287"/>
        <dbReference type="ChEBI" id="CHEBI:57288"/>
        <dbReference type="EC" id="2.3.3.9"/>
    </reaction>
</comment>
<comment type="pathway">
    <text>Carbohydrate metabolism; glyoxylate cycle; (S)-malate from isocitrate: step 2/2.</text>
</comment>
<comment type="subcellular location">
    <subcellularLocation>
        <location>Glyoxysome</location>
    </subcellularLocation>
</comment>
<comment type="similarity">
    <text evidence="3">Belongs to the malate synthase family.</text>
</comment>
<sequence length="566" mass="64636">MGSLGMYSESAVRKKSSRGYDVPEGVDIRGRYDEEFARILNKEALLFVADLQRTFRNHIRYSMECRREAKRRYNEGAVPGFDPATKYIRESEWTCASVPPAVADRRVEITGPVERKMIINALNSGAKVFMADFEDALSPNWENLMRGQINLKDAVDGTISFHDKARNKVYKLNDQTAKLFVRPRGWHFAEAHIFIDGEPATGCLVDFGLYFFHNHANFRRSQGQGSGPFFYLPKMEHSREAKIWNSVFERAEKMAGIERGSIRATVLIETLPAVFQMDEILYELRDHSVGLNCGRWDYIFSYVKTFQAHLDRLLPDRVQVGMAQHFMRSYSDLLIRTCHTVVCHVGGMAAQIPIRDDPKANEMALELVRKDKLREAKAGHDGTWAAHPGLIPACMEVFTNSMGNAPNQIRSARRDDAANLTEDDLLQQPRGVRTLEGLRLNTRVGIQYLAAWLTGTGSVPLYNLMEDAATAEISRVQNWQWLKYGVELDGDGLGVRVNKELFARVVEEEMERIEREVGKEKFRKGMYKEACKMFTRQCTAPTLDDFLTLDAYNHIVIHHPRELSRL</sequence>
<dbReference type="EC" id="2.3.3.9"/>
<dbReference type="EMBL" id="X56948">
    <property type="protein sequence ID" value="CAA40262.1"/>
    <property type="molecule type" value="mRNA"/>
</dbReference>
<dbReference type="SMR" id="P24571"/>
<dbReference type="UniPathway" id="UPA00703">
    <property type="reaction ID" value="UER00720"/>
</dbReference>
<dbReference type="Proteomes" id="UP000504608">
    <property type="component" value="Unplaced"/>
</dbReference>
<dbReference type="GO" id="GO:0009514">
    <property type="term" value="C:glyoxysome"/>
    <property type="evidence" value="ECO:0007669"/>
    <property type="project" value="UniProtKB-SubCell"/>
</dbReference>
<dbReference type="GO" id="GO:0004474">
    <property type="term" value="F:malate synthase activity"/>
    <property type="evidence" value="ECO:0007669"/>
    <property type="project" value="UniProtKB-EC"/>
</dbReference>
<dbReference type="GO" id="GO:0006097">
    <property type="term" value="P:glyoxylate cycle"/>
    <property type="evidence" value="ECO:0007669"/>
    <property type="project" value="UniProtKB-UniPathway"/>
</dbReference>
<dbReference type="GO" id="GO:0006099">
    <property type="term" value="P:tricarboxylic acid cycle"/>
    <property type="evidence" value="ECO:0007669"/>
    <property type="project" value="UniProtKB-KW"/>
</dbReference>
<dbReference type="CDD" id="cd00727">
    <property type="entry name" value="malate_synt_A"/>
    <property type="match status" value="1"/>
</dbReference>
<dbReference type="FunFam" id="1.20.1220.12:FF:000001">
    <property type="entry name" value="Malate synthase"/>
    <property type="match status" value="1"/>
</dbReference>
<dbReference type="FunFam" id="3.20.20.360:FF:000001">
    <property type="entry name" value="Malate synthase"/>
    <property type="match status" value="1"/>
</dbReference>
<dbReference type="Gene3D" id="3.20.20.360">
    <property type="entry name" value="Malate synthase, domain 3"/>
    <property type="match status" value="1"/>
</dbReference>
<dbReference type="Gene3D" id="1.20.1220.12">
    <property type="entry name" value="Malate synthase, domain III"/>
    <property type="match status" value="1"/>
</dbReference>
<dbReference type="InterPro" id="IPR044856">
    <property type="entry name" value="Malate_synth_C_sf"/>
</dbReference>
<dbReference type="InterPro" id="IPR011076">
    <property type="entry name" value="Malate_synth_sf"/>
</dbReference>
<dbReference type="InterPro" id="IPR006252">
    <property type="entry name" value="Malate_synthA"/>
</dbReference>
<dbReference type="InterPro" id="IPR019830">
    <property type="entry name" value="Malate_synthase_CS"/>
</dbReference>
<dbReference type="InterPro" id="IPR001465">
    <property type="entry name" value="Malate_synthase_TIM"/>
</dbReference>
<dbReference type="InterPro" id="IPR048355">
    <property type="entry name" value="MS_C"/>
</dbReference>
<dbReference type="InterPro" id="IPR048356">
    <property type="entry name" value="MS_N"/>
</dbReference>
<dbReference type="InterPro" id="IPR046363">
    <property type="entry name" value="MS_N_TIM-barrel_dom"/>
</dbReference>
<dbReference type="NCBIfam" id="TIGR01344">
    <property type="entry name" value="malate_syn_A"/>
    <property type="match status" value="1"/>
</dbReference>
<dbReference type="PANTHER" id="PTHR42902">
    <property type="entry name" value="MALATE SYNTHASE"/>
    <property type="match status" value="1"/>
</dbReference>
<dbReference type="PANTHER" id="PTHR42902:SF1">
    <property type="entry name" value="MALATE SYNTHASE 1-RELATED"/>
    <property type="match status" value="1"/>
</dbReference>
<dbReference type="Pfam" id="PF20659">
    <property type="entry name" value="MS_C"/>
    <property type="match status" value="1"/>
</dbReference>
<dbReference type="Pfam" id="PF20656">
    <property type="entry name" value="MS_N"/>
    <property type="match status" value="1"/>
</dbReference>
<dbReference type="Pfam" id="PF01274">
    <property type="entry name" value="MS_TIM-barrel"/>
    <property type="match status" value="1"/>
</dbReference>
<dbReference type="PIRSF" id="PIRSF001363">
    <property type="entry name" value="Malate_synth"/>
    <property type="match status" value="1"/>
</dbReference>
<dbReference type="SUPFAM" id="SSF51645">
    <property type="entry name" value="Malate synthase G"/>
    <property type="match status" value="1"/>
</dbReference>
<dbReference type="PROSITE" id="PS00510">
    <property type="entry name" value="MALATE_SYNTHASE"/>
    <property type="match status" value="1"/>
</dbReference>
<organism>
    <name type="scientific">Cucurbita maxima</name>
    <name type="common">Pumpkin</name>
    <name type="synonym">Winter squash</name>
    <dbReference type="NCBI Taxonomy" id="3661"/>
    <lineage>
        <taxon>Eukaryota</taxon>
        <taxon>Viridiplantae</taxon>
        <taxon>Streptophyta</taxon>
        <taxon>Embryophyta</taxon>
        <taxon>Tracheophyta</taxon>
        <taxon>Spermatophyta</taxon>
        <taxon>Magnoliopsida</taxon>
        <taxon>eudicotyledons</taxon>
        <taxon>Gunneridae</taxon>
        <taxon>Pentapetalae</taxon>
        <taxon>rosids</taxon>
        <taxon>fabids</taxon>
        <taxon>Cucurbitales</taxon>
        <taxon>Cucurbitaceae</taxon>
        <taxon>Cucurbiteae</taxon>
        <taxon>Cucurbita</taxon>
    </lineage>
</organism>
<proteinExistence type="evidence at protein level"/>
<reference key="1">
    <citation type="journal article" date="1991" name="Eur. J. Biochem.">
        <title>Pumpkin malate synthase. Cloning and sequencing of the cDNA and northern blot analysis.</title>
        <authorList>
            <person name="Mori H."/>
            <person name="Takeda-Yoshikawa Y."/>
            <person name="Hara-Nishimura I."/>
            <person name="Nishimura M."/>
        </authorList>
    </citation>
    <scope>NUCLEOTIDE SEQUENCE [MRNA]</scope>
    <scope>PROTEIN SEQUENCE OF 83-91; 197-206 AND 417-426</scope>
    <source>
        <strain>cv. Kurokawa Amakuri Nankin</strain>
        <tissue>Etiolated cotyledon</tissue>
    </source>
</reference>